<dbReference type="EMBL" id="BA000022">
    <property type="protein sequence ID" value="BAA18760.1"/>
    <property type="molecule type" value="Genomic_DNA"/>
</dbReference>
<dbReference type="PIR" id="S76848">
    <property type="entry name" value="S76848"/>
</dbReference>
<dbReference type="SMR" id="P74644"/>
<dbReference type="STRING" id="1148.gene:10500532"/>
<dbReference type="PaxDb" id="1148-1653850"/>
<dbReference type="EnsemblBacteria" id="BAA18760">
    <property type="protein sequence ID" value="BAA18760"/>
    <property type="gene ID" value="BAA18760"/>
</dbReference>
<dbReference type="KEGG" id="syn:slr0756"/>
<dbReference type="eggNOG" id="ENOG502Z8HQ">
    <property type="taxonomic scope" value="Bacteria"/>
</dbReference>
<dbReference type="InParanoid" id="P74644"/>
<dbReference type="Proteomes" id="UP000001425">
    <property type="component" value="Chromosome"/>
</dbReference>
<dbReference type="GO" id="GO:0007623">
    <property type="term" value="P:circadian rhythm"/>
    <property type="evidence" value="ECO:0000315"/>
    <property type="project" value="UniProtKB"/>
</dbReference>
<dbReference type="Gene3D" id="3.40.50.2300">
    <property type="match status" value="1"/>
</dbReference>
<dbReference type="Gene3D" id="1.10.1240.30">
    <property type="entry name" value="KaiA/RbsU domain"/>
    <property type="match status" value="1"/>
</dbReference>
<dbReference type="InterPro" id="IPR011006">
    <property type="entry name" value="CheY-like_superfamily"/>
</dbReference>
<dbReference type="InterPro" id="IPR011648">
    <property type="entry name" value="Circadian_clock_KaiA"/>
</dbReference>
<dbReference type="InterPro" id="IPR020844">
    <property type="entry name" value="Circadian_clock_KaiA_N"/>
</dbReference>
<dbReference type="InterPro" id="IPR020856">
    <property type="entry name" value="Circadian_clock_protein_KaiA_C"/>
</dbReference>
<dbReference type="InterPro" id="IPR017944">
    <property type="entry name" value="KaiA/RbsU_helical_domain_sf"/>
</dbReference>
<dbReference type="Pfam" id="PF07688">
    <property type="entry name" value="KaiA"/>
    <property type="match status" value="1"/>
</dbReference>
<dbReference type="Pfam" id="PF21714">
    <property type="entry name" value="KaiA_N"/>
    <property type="match status" value="1"/>
</dbReference>
<dbReference type="SMART" id="SM01247">
    <property type="entry name" value="KaiA"/>
    <property type="match status" value="1"/>
</dbReference>
<dbReference type="SUPFAM" id="SSF52172">
    <property type="entry name" value="CheY-like"/>
    <property type="match status" value="1"/>
</dbReference>
<dbReference type="SUPFAM" id="SSF101215">
    <property type="entry name" value="KaiA/RbsU domain"/>
    <property type="match status" value="1"/>
</dbReference>
<dbReference type="PROSITE" id="PS51431">
    <property type="entry name" value="KAIA_C"/>
    <property type="match status" value="1"/>
</dbReference>
<dbReference type="PROSITE" id="PS51430">
    <property type="entry name" value="KAIA_N"/>
    <property type="match status" value="1"/>
</dbReference>
<feature type="chain" id="PRO_0000217874" description="Circadian clock oscillator protein KaiA">
    <location>
        <begin position="1"/>
        <end position="299"/>
    </location>
</feature>
<feature type="domain" description="KaiA N-terminal" evidence="3">
    <location>
        <begin position="1"/>
        <end position="169"/>
    </location>
</feature>
<feature type="domain" description="KaiA C-terminal" evidence="4">
    <location>
        <begin position="179"/>
        <end position="287"/>
    </location>
</feature>
<feature type="region of interest" description="PsR domain, binds oxidized quinones" evidence="1">
    <location>
        <begin position="1"/>
        <end position="135"/>
    </location>
</feature>
<feature type="region of interest" description="Flexible linker" evidence="1">
    <location>
        <begin position="170"/>
        <end position="178"/>
    </location>
</feature>
<keyword id="KW-0090">Biological rhythms</keyword>
<keyword id="KW-1185">Reference proteome</keyword>
<evidence type="ECO:0000250" key="1">
    <source>
        <dbReference type="UniProtKB" id="Q79PF6"/>
    </source>
</evidence>
<evidence type="ECO:0000250" key="2">
    <source>
        <dbReference type="UniProtKB" id="Q79V62"/>
    </source>
</evidence>
<evidence type="ECO:0000255" key="3">
    <source>
        <dbReference type="PROSITE-ProRule" id="PRU00760"/>
    </source>
</evidence>
<evidence type="ECO:0000255" key="4">
    <source>
        <dbReference type="PROSITE-ProRule" id="PRU00761"/>
    </source>
</evidence>
<evidence type="ECO:0000269" key="5">
    <source>
    </source>
</evidence>
<evidence type="ECO:0000269" key="6">
    <source>
    </source>
</evidence>
<evidence type="ECO:0000269" key="7">
    <source>
    </source>
</evidence>
<evidence type="ECO:0000303" key="8">
    <source>
    </source>
</evidence>
<evidence type="ECO:0000303" key="9">
    <source>
    </source>
</evidence>
<evidence type="ECO:0000305" key="10"/>
<evidence type="ECO:0000305" key="11">
    <source>
    </source>
</evidence>
<evidence type="ECO:0000312" key="12">
    <source>
        <dbReference type="EMBL" id="BAA18760.1"/>
    </source>
</evidence>
<organism>
    <name type="scientific">Synechocystis sp. (strain ATCC 27184 / PCC 6803 / Kazusa)</name>
    <dbReference type="NCBI Taxonomy" id="1111708"/>
    <lineage>
        <taxon>Bacteria</taxon>
        <taxon>Bacillati</taxon>
        <taxon>Cyanobacteriota</taxon>
        <taxon>Cyanophyceae</taxon>
        <taxon>Synechococcales</taxon>
        <taxon>Merismopediaceae</taxon>
        <taxon>Synechocystis</taxon>
    </lineage>
</organism>
<proteinExistence type="evidence at protein level"/>
<reference evidence="12" key="1">
    <citation type="journal article" date="1996" name="DNA Res.">
        <title>Sequence analysis of the genome of the unicellular cyanobacterium Synechocystis sp. strain PCC6803. II. Sequence determination of the entire genome and assignment of potential protein-coding regions.</title>
        <authorList>
            <person name="Kaneko T."/>
            <person name="Sato S."/>
            <person name="Kotani H."/>
            <person name="Tanaka A."/>
            <person name="Asamizu E."/>
            <person name="Nakamura Y."/>
            <person name="Miyajima N."/>
            <person name="Hirosawa M."/>
            <person name="Sugiura M."/>
            <person name="Sasamoto S."/>
            <person name="Kimura T."/>
            <person name="Hosouchi T."/>
            <person name="Matsuno A."/>
            <person name="Muraki A."/>
            <person name="Nakazaki N."/>
            <person name="Naruo K."/>
            <person name="Okumura S."/>
            <person name="Shimpo S."/>
            <person name="Takeuchi C."/>
            <person name="Wada T."/>
            <person name="Watanabe A."/>
            <person name="Yamada M."/>
            <person name="Yasuda M."/>
            <person name="Tabata S."/>
        </authorList>
    </citation>
    <scope>NUCLEOTIDE SEQUENCE [LARGE SCALE GENOMIC DNA]</scope>
    <source>
        <strain>ATCC 27184 / PCC 6803 / Kazusa</strain>
    </source>
</reference>
<reference key="2">
    <citation type="journal article" date="2013" name="Microbiology">
        <title>Biochemical analysis of three putative KaiC clock proteins from Synechocystis sp. PCC 6803 suggests their functional divergence.</title>
        <authorList>
            <person name="Wiegard A."/>
            <person name="Doerrich A.K."/>
            <person name="Deinzer H.T."/>
            <person name="Beck C."/>
            <person name="Wilde A."/>
            <person name="Holtzendorff J."/>
            <person name="Axmann I.M."/>
        </authorList>
    </citation>
    <scope>FUNCTION</scope>
    <scope>INTERACTION WITH KAIC1</scope>
    <source>
        <strain>ATCC 27184 / PCC 6803 / Kazusa</strain>
    </source>
</reference>
<reference key="3">
    <citation type="journal article" date="2014" name="Microbiology">
        <title>Deletion of the Synechocystis sp. PCC 6803 kaiAB1C1 gene cluster causes impaired cell growth under light-dark conditions.</title>
        <authorList>
            <person name="Doerrich A.K."/>
            <person name="Mitschke J."/>
            <person name="Siadat O."/>
            <person name="Wilde A."/>
        </authorList>
    </citation>
    <scope>FUNCTION</scope>
    <scope>DISRUPTION PHENOTYPE</scope>
    <source>
        <strain>ATCC 27184 / PCC 6803 / Kazusa</strain>
    </source>
</reference>
<reference key="4">
    <citation type="journal article" date="2020" name="J. Bacteriol.">
        <title>Synechocystis KaiC3 Displays Temperature- and KaiB-Dependent ATPase Activity and Is Important for Growth in Darkness.</title>
        <authorList>
            <person name="Wiegard A."/>
            <person name="Koebler C."/>
            <person name="Oyama K."/>
            <person name="Doerrich A.K."/>
            <person name="Azai C."/>
            <person name="Terauchi K."/>
            <person name="Wilde A."/>
            <person name="Axmann I.M."/>
        </authorList>
    </citation>
    <scope>INTERACTION WITH ITSELF</scope>
    <source>
        <strain>ATCC 27184 / PCC 6803 / Kazusa</strain>
    </source>
</reference>
<sequence length="299" mass="34894">MQSPLSLCLFAPEHVAHRLRSIFQGDRHYLSTFQALDDFCAFLEDKPERIDCLLVYYEANSLPVLNRLYEQGRLLPIILLEPSPSALAKTTDEHPTIVYHNAEIHLPESQWSELPTVVDRAIAHYLHLGPICTLPNQTETIPAPIVDESSQSFLLLQQRRLADKLKERLGYLGVYYKRKPSHFYRNFSPQEKQEYLEDLSSQYREIILSYFSDEGTVNDLLDQFVNQAFFADLAISQILEIHMELMDEFSQHLKLEGRSEEVLLDYRLVLIDILAHLGEMYRRSIPREDIPFDVYYQTD</sequence>
<name>KAIA_SYNY3</name>
<gene>
    <name evidence="8" type="primary">kaiA</name>
    <name type="ordered locus">slr0756</name>
</gene>
<comment type="function">
    <text evidence="1">Key component of the KaiABC oscillator complex, which constitutes the main circadian regulator in cyanobacteria. Complex composition changes during the circadian cycle to control KaiC phosphorylation. KaiA stimulates KaiC autophosphorylation, while KaiB sequesters KaiA, leading to KaiC autodephosphorylation. KaiA binding to the KaiC CII domain during the subjective day yields KaiA(2-4):KaiC(6) complexes which stimulate KaiC autophosphorylation. Phospho-Ser-431 KaiC accumulation triggers binding of KaiB during the subjective night to form the KaiB(6):KaiC(6) complex, leading to changes in the output regulators CikA and SasA. KaiB(6):KaiC(6) formation exposes a site for KaiA binding on KaiB that sequesters KaiA from KaiC's CII domain, making the KaiC(6):KaiB(6):KaiA(12) complex resulting in KaiC autodephosphorylation. Complete dephosphorylation of KaiC leads to dissociation of KaiA(2):KaiB(1), completing 1 cycle of the Kai oscillator.</text>
</comment>
<comment type="function">
    <text evidence="5 6 7">Component of the oscillator and circadian clock in this organism, enhances fitness in a rhythmic environment (PubMed:25139948). Stimulates KaiC1 to autophosphorylate, has no effect on the kinase activity of KaiC2 or KaiC3 (PubMed:23449916, PubMed:31767776).</text>
</comment>
<comment type="function">
    <text evidence="1">Binds oxidized quinones via the N-terminal PsR domain, allowing it to sense redox changes and possibly mediate clock input.</text>
</comment>
<comment type="subunit">
    <text evidence="1 5 7 11">Homodimer (Probable). The KaiABC1 complex composition changes during the circadian cycle to control KaiC1 phosphorylation. Complexes KaiC1(6), KaiA(2-4):KaiC1(6), KaiB(6):KaiC1(6) and KaiC1(6):KaiB(6):KaiA(12) are among the most important forms, many form cooperatively. KaiA and CikA bind to the same region of the KaiB(fs) form and therefore compete (By similarity). Interacts with KaiC1 but not KaiC2 or KaiC3 (PubMed:23449916). Interacts with itself, not seen to interact with other Kai proteins (PubMed:31767776).</text>
</comment>
<comment type="domain">
    <text evidence="1 2">The N-terminal pseudoreceiver domain (PsR, approximately equal to KaiA N-terminal) binds oxidized quinones (By similarity). The KaiA C-terminal domain mediates interaction with KaiC, homodimerization, and is responsible for the clock oscillation function (By similarity).</text>
</comment>
<comment type="disruption phenotype">
    <text evidence="6">A triple kaiA-kaiB1-kaiC1 deletion grows normally under photoautotrophic conditions in continuous light. In a light/dark regime has strongly restricted viability and impaired growth behavior, and overall decreased pigments (after 5-6 days); phenotype is more extreme when grown on 0.2% glucose.</text>
</comment>
<comment type="similarity">
    <text evidence="10">Belongs to the KaiA family.</text>
</comment>
<accession>P74644</accession>
<protein>
    <recommendedName>
        <fullName evidence="9">Circadian clock oscillator protein KaiA</fullName>
    </recommendedName>
</protein>